<organism>
    <name type="scientific">Rickettsia typhi (strain ATCC VR-144 / Wilmington)</name>
    <dbReference type="NCBI Taxonomy" id="257363"/>
    <lineage>
        <taxon>Bacteria</taxon>
        <taxon>Pseudomonadati</taxon>
        <taxon>Pseudomonadota</taxon>
        <taxon>Alphaproteobacteria</taxon>
        <taxon>Rickettsiales</taxon>
        <taxon>Rickettsiaceae</taxon>
        <taxon>Rickettsieae</taxon>
        <taxon>Rickettsia</taxon>
        <taxon>typhus group</taxon>
    </lineage>
</organism>
<keyword id="KW-0240">DNA-directed RNA polymerase</keyword>
<keyword id="KW-0548">Nucleotidyltransferase</keyword>
<keyword id="KW-0804">Transcription</keyword>
<keyword id="KW-0808">Transferase</keyword>
<comment type="function">
    <text evidence="1">Promotes RNA polymerase assembly. Latches the N- and C-terminal regions of the beta' subunit thereby facilitating its interaction with the beta and alpha subunits.</text>
</comment>
<comment type="catalytic activity">
    <reaction evidence="1">
        <text>RNA(n) + a ribonucleoside 5'-triphosphate = RNA(n+1) + diphosphate</text>
        <dbReference type="Rhea" id="RHEA:21248"/>
        <dbReference type="Rhea" id="RHEA-COMP:14527"/>
        <dbReference type="Rhea" id="RHEA-COMP:17342"/>
        <dbReference type="ChEBI" id="CHEBI:33019"/>
        <dbReference type="ChEBI" id="CHEBI:61557"/>
        <dbReference type="ChEBI" id="CHEBI:140395"/>
        <dbReference type="EC" id="2.7.7.6"/>
    </reaction>
</comment>
<comment type="subunit">
    <text evidence="1">The RNAP catalytic core consists of 2 alpha, 1 beta, 1 beta' and 1 omega subunit. When a sigma factor is associated with the core the holoenzyme is formed, which can initiate transcription.</text>
</comment>
<comment type="similarity">
    <text evidence="1">Belongs to the RNA polymerase subunit omega family.</text>
</comment>
<gene>
    <name evidence="1" type="primary">rpoZ</name>
    <name type="ordered locus">RT0567</name>
</gene>
<protein>
    <recommendedName>
        <fullName evidence="1">DNA-directed RNA polymerase subunit omega</fullName>
        <shortName evidence="1">RNAP omega subunit</shortName>
        <ecNumber evidence="1">2.7.7.6</ecNumber>
    </recommendedName>
    <alternativeName>
        <fullName evidence="1">RNA polymerase omega subunit</fullName>
    </alternativeName>
    <alternativeName>
        <fullName evidence="1">Transcriptase subunit omega</fullName>
    </alternativeName>
</protein>
<evidence type="ECO:0000255" key="1">
    <source>
        <dbReference type="HAMAP-Rule" id="MF_00366"/>
    </source>
</evidence>
<proteinExistence type="inferred from homology"/>
<accession>Q68WF8</accession>
<name>RPOZ_RICTY</name>
<feature type="chain" id="PRO_0000237501" description="DNA-directed RNA polymerase subunit omega">
    <location>
        <begin position="1"/>
        <end position="127"/>
    </location>
</feature>
<dbReference type="EC" id="2.7.7.6" evidence="1"/>
<dbReference type="EMBL" id="AE017197">
    <property type="protein sequence ID" value="AAU04034.1"/>
    <property type="molecule type" value="Genomic_DNA"/>
</dbReference>
<dbReference type="RefSeq" id="WP_011191015.1">
    <property type="nucleotide sequence ID" value="NC_006142.1"/>
</dbReference>
<dbReference type="SMR" id="Q68WF8"/>
<dbReference type="KEGG" id="rty:RT0567"/>
<dbReference type="eggNOG" id="COG1758">
    <property type="taxonomic scope" value="Bacteria"/>
</dbReference>
<dbReference type="HOGENOM" id="CLU_138545_0_0_5"/>
<dbReference type="OrthoDB" id="9796300at2"/>
<dbReference type="Proteomes" id="UP000000604">
    <property type="component" value="Chromosome"/>
</dbReference>
<dbReference type="GO" id="GO:0000428">
    <property type="term" value="C:DNA-directed RNA polymerase complex"/>
    <property type="evidence" value="ECO:0007669"/>
    <property type="project" value="UniProtKB-KW"/>
</dbReference>
<dbReference type="GO" id="GO:0003677">
    <property type="term" value="F:DNA binding"/>
    <property type="evidence" value="ECO:0007669"/>
    <property type="project" value="UniProtKB-UniRule"/>
</dbReference>
<dbReference type="GO" id="GO:0003899">
    <property type="term" value="F:DNA-directed RNA polymerase activity"/>
    <property type="evidence" value="ECO:0007669"/>
    <property type="project" value="UniProtKB-UniRule"/>
</dbReference>
<dbReference type="GO" id="GO:0006351">
    <property type="term" value="P:DNA-templated transcription"/>
    <property type="evidence" value="ECO:0007669"/>
    <property type="project" value="UniProtKB-UniRule"/>
</dbReference>
<dbReference type="Gene3D" id="3.90.940.10">
    <property type="match status" value="1"/>
</dbReference>
<dbReference type="HAMAP" id="MF_00366">
    <property type="entry name" value="RNApol_bact_RpoZ"/>
    <property type="match status" value="1"/>
</dbReference>
<dbReference type="InterPro" id="IPR003716">
    <property type="entry name" value="DNA-dir_RNA_pol_omega"/>
</dbReference>
<dbReference type="InterPro" id="IPR006110">
    <property type="entry name" value="Pol_omega/Rpo6/RPB6"/>
</dbReference>
<dbReference type="InterPro" id="IPR036161">
    <property type="entry name" value="RPB6/omega-like_sf"/>
</dbReference>
<dbReference type="NCBIfam" id="TIGR00690">
    <property type="entry name" value="rpoZ"/>
    <property type="match status" value="1"/>
</dbReference>
<dbReference type="PANTHER" id="PTHR34476">
    <property type="entry name" value="DNA-DIRECTED RNA POLYMERASE SUBUNIT OMEGA"/>
    <property type="match status" value="1"/>
</dbReference>
<dbReference type="PANTHER" id="PTHR34476:SF1">
    <property type="entry name" value="DNA-DIRECTED RNA POLYMERASE SUBUNIT OMEGA"/>
    <property type="match status" value="1"/>
</dbReference>
<dbReference type="Pfam" id="PF01192">
    <property type="entry name" value="RNA_pol_Rpb6"/>
    <property type="match status" value="1"/>
</dbReference>
<dbReference type="SMART" id="SM01409">
    <property type="entry name" value="RNA_pol_Rpb6"/>
    <property type="match status" value="1"/>
</dbReference>
<dbReference type="SUPFAM" id="SSF63562">
    <property type="entry name" value="RPB6/omega subunit-like"/>
    <property type="match status" value="1"/>
</dbReference>
<reference key="1">
    <citation type="journal article" date="2004" name="J. Bacteriol.">
        <title>Complete genome sequence of Rickettsia typhi and comparison with sequences of other Rickettsiae.</title>
        <authorList>
            <person name="McLeod M.P."/>
            <person name="Qin X."/>
            <person name="Karpathy S.E."/>
            <person name="Gioia J."/>
            <person name="Highlander S.K."/>
            <person name="Fox G.E."/>
            <person name="McNeill T.Z."/>
            <person name="Jiang H."/>
            <person name="Muzny D."/>
            <person name="Jacob L.S."/>
            <person name="Hawes A.C."/>
            <person name="Sodergren E."/>
            <person name="Gill R."/>
            <person name="Hume J."/>
            <person name="Morgan M."/>
            <person name="Fan G."/>
            <person name="Amin A.G."/>
            <person name="Gibbs R.A."/>
            <person name="Hong C."/>
            <person name="Yu X.-J."/>
            <person name="Walker D.H."/>
            <person name="Weinstock G.M."/>
        </authorList>
    </citation>
    <scope>NUCLEOTIDE SEQUENCE [LARGE SCALE GENOMIC DNA]</scope>
    <source>
        <strain>ATCC VR-144 / Wilmington</strain>
    </source>
</reference>
<sequence>MARITAEDCNKIIPDRFRLVVLATRYAKLLNYKVETNQIKKEKRDKPPVISLRRIAAGKVSVPQLEQDLINSLRTSSMIEPLVNQDESEDVEEKFEYLPEVYIGEDYSDLDDQIFINENGEDYETDK</sequence>